<proteinExistence type="inferred from homology"/>
<dbReference type="EC" id="3.5.1.n3" evidence="1"/>
<dbReference type="EMBL" id="CP000094">
    <property type="protein sequence ID" value="ABA74585.1"/>
    <property type="molecule type" value="Genomic_DNA"/>
</dbReference>
<dbReference type="RefSeq" id="WP_011334256.1">
    <property type="nucleotide sequence ID" value="NC_007492.2"/>
</dbReference>
<dbReference type="SMR" id="Q3KCC0"/>
<dbReference type="KEGG" id="pfo:Pfl01_2844"/>
<dbReference type="eggNOG" id="COG0726">
    <property type="taxonomic scope" value="Bacteria"/>
</dbReference>
<dbReference type="HOGENOM" id="CLU_084199_0_0_6"/>
<dbReference type="UniPathway" id="UPA00030"/>
<dbReference type="UniPathway" id="UPA00036">
    <property type="reaction ID" value="UER00496"/>
</dbReference>
<dbReference type="Proteomes" id="UP000002704">
    <property type="component" value="Chromosome"/>
</dbReference>
<dbReference type="GO" id="GO:0016020">
    <property type="term" value="C:membrane"/>
    <property type="evidence" value="ECO:0007669"/>
    <property type="project" value="GOC"/>
</dbReference>
<dbReference type="GO" id="GO:0016811">
    <property type="term" value="F:hydrolase activity, acting on carbon-nitrogen (but not peptide) bonds, in linear amides"/>
    <property type="evidence" value="ECO:0007669"/>
    <property type="project" value="UniProtKB-UniRule"/>
</dbReference>
<dbReference type="GO" id="GO:0036108">
    <property type="term" value="P:4-amino-4-deoxy-alpha-L-arabinopyranosyl undecaprenyl phosphate biosynthetic process"/>
    <property type="evidence" value="ECO:0007669"/>
    <property type="project" value="UniProtKB-UniRule"/>
</dbReference>
<dbReference type="GO" id="GO:0009245">
    <property type="term" value="P:lipid A biosynthetic process"/>
    <property type="evidence" value="ECO:0007669"/>
    <property type="project" value="UniProtKB-UniRule"/>
</dbReference>
<dbReference type="GO" id="GO:0009103">
    <property type="term" value="P:lipopolysaccharide biosynthetic process"/>
    <property type="evidence" value="ECO:0007669"/>
    <property type="project" value="UniProtKB-UniRule"/>
</dbReference>
<dbReference type="GO" id="GO:0046677">
    <property type="term" value="P:response to antibiotic"/>
    <property type="evidence" value="ECO:0007669"/>
    <property type="project" value="UniProtKB-KW"/>
</dbReference>
<dbReference type="CDD" id="cd10939">
    <property type="entry name" value="CE4_ArnD"/>
    <property type="match status" value="1"/>
</dbReference>
<dbReference type="Gene3D" id="3.20.20.370">
    <property type="entry name" value="Glycoside hydrolase/deacetylase"/>
    <property type="match status" value="1"/>
</dbReference>
<dbReference type="HAMAP" id="MF_01870">
    <property type="entry name" value="ArnD"/>
    <property type="match status" value="1"/>
</dbReference>
<dbReference type="InterPro" id="IPR023557">
    <property type="entry name" value="ArnD"/>
</dbReference>
<dbReference type="InterPro" id="IPR011330">
    <property type="entry name" value="Glyco_hydro/deAcase_b/a-brl"/>
</dbReference>
<dbReference type="InterPro" id="IPR002509">
    <property type="entry name" value="NODB_dom"/>
</dbReference>
<dbReference type="InterPro" id="IPR050248">
    <property type="entry name" value="Polysacc_deacetylase_ArnD"/>
</dbReference>
<dbReference type="NCBIfam" id="NF011923">
    <property type="entry name" value="PRK15394.1"/>
    <property type="match status" value="1"/>
</dbReference>
<dbReference type="PANTHER" id="PTHR10587:SF137">
    <property type="entry name" value="4-DEOXY-4-FORMAMIDO-L-ARABINOSE-PHOSPHOUNDECAPRENOL DEFORMYLASE ARND-RELATED"/>
    <property type="match status" value="1"/>
</dbReference>
<dbReference type="PANTHER" id="PTHR10587">
    <property type="entry name" value="GLYCOSYL TRANSFERASE-RELATED"/>
    <property type="match status" value="1"/>
</dbReference>
<dbReference type="Pfam" id="PF01522">
    <property type="entry name" value="Polysacc_deac_1"/>
    <property type="match status" value="1"/>
</dbReference>
<dbReference type="SUPFAM" id="SSF88713">
    <property type="entry name" value="Glycoside hydrolase/deacetylase"/>
    <property type="match status" value="1"/>
</dbReference>
<dbReference type="PROSITE" id="PS51677">
    <property type="entry name" value="NODB"/>
    <property type="match status" value="1"/>
</dbReference>
<sequence length="294" mass="32731">MQAGLRIDVDTFRGTREGVPRLLEILDEAQIKATFFFSVGPDNMGRHLWRLIRPQFLWKMLRSNAAGLYGWDILLAGTAWPGKPIGRDLGHLMRQARAAGHEVGLHAWDHHGWQANAGHWSAAQLVEQIRQGVDTLSDILGEKVTCSAAAGWRADERVIEAKQAFGFRYNSDCRGQRVFRPLLADGSVGAPQIPVDLPTFDEVVGPSVAAKDFNAFILDRFRPENLNVYTIHAEVEGILMADDFRRLLAEARQQNIHFQPLGDLLPEFLNSLPVGRVQRGALEGREGWLGVQGA</sequence>
<accession>Q3KCC0</accession>
<reference key="1">
    <citation type="journal article" date="2009" name="Genome Biol.">
        <title>Genomic and genetic analyses of diversity and plant interactions of Pseudomonas fluorescens.</title>
        <authorList>
            <person name="Silby M.W."/>
            <person name="Cerdeno-Tarraga A.M."/>
            <person name="Vernikos G.S."/>
            <person name="Giddens S.R."/>
            <person name="Jackson R.W."/>
            <person name="Preston G.M."/>
            <person name="Zhang X.-X."/>
            <person name="Moon C.D."/>
            <person name="Gehrig S.M."/>
            <person name="Godfrey S.A.C."/>
            <person name="Knight C.G."/>
            <person name="Malone J.G."/>
            <person name="Robinson Z."/>
            <person name="Spiers A.J."/>
            <person name="Harris S."/>
            <person name="Challis G.L."/>
            <person name="Yaxley A.M."/>
            <person name="Harris D."/>
            <person name="Seeger K."/>
            <person name="Murphy L."/>
            <person name="Rutter S."/>
            <person name="Squares R."/>
            <person name="Quail M.A."/>
            <person name="Saunders E."/>
            <person name="Mavromatis K."/>
            <person name="Brettin T.S."/>
            <person name="Bentley S.D."/>
            <person name="Hothersall J."/>
            <person name="Stephens E."/>
            <person name="Thomas C.M."/>
            <person name="Parkhill J."/>
            <person name="Levy S.B."/>
            <person name="Rainey P.B."/>
            <person name="Thomson N.R."/>
        </authorList>
    </citation>
    <scope>NUCLEOTIDE SEQUENCE [LARGE SCALE GENOMIC DNA]</scope>
    <source>
        <strain>Pf0-1</strain>
    </source>
</reference>
<organism>
    <name type="scientific">Pseudomonas fluorescens (strain Pf0-1)</name>
    <dbReference type="NCBI Taxonomy" id="205922"/>
    <lineage>
        <taxon>Bacteria</taxon>
        <taxon>Pseudomonadati</taxon>
        <taxon>Pseudomonadota</taxon>
        <taxon>Gammaproteobacteria</taxon>
        <taxon>Pseudomonadales</taxon>
        <taxon>Pseudomonadaceae</taxon>
        <taxon>Pseudomonas</taxon>
    </lineage>
</organism>
<protein>
    <recommendedName>
        <fullName evidence="1">Probable 4-deoxy-4-formamido-L-arabinose-phosphoundecaprenol deformylase ArnD</fullName>
        <ecNumber evidence="1">3.5.1.n3</ecNumber>
    </recommendedName>
</protein>
<name>ARND_PSEPF</name>
<evidence type="ECO:0000255" key="1">
    <source>
        <dbReference type="HAMAP-Rule" id="MF_01870"/>
    </source>
</evidence>
<comment type="function">
    <text evidence="1">Catalyzes the deformylation of 4-deoxy-4-formamido-L-arabinose-phosphoundecaprenol to 4-amino-4-deoxy-L-arabinose-phosphoundecaprenol. The modified arabinose is attached to lipid A and is required for resistance to polymyxin and cationic antimicrobial peptides.</text>
</comment>
<comment type="catalytic activity">
    <reaction evidence="1">
        <text>4-deoxy-4-formamido-alpha-L-arabinopyranosyl di-trans,octa-cis-undecaprenyl phosphate + H2O = 4-amino-4-deoxy-alpha-L-arabinopyranosyl di-trans,octa-cis-undecaprenyl phosphate + formate</text>
        <dbReference type="Rhea" id="RHEA:27734"/>
        <dbReference type="ChEBI" id="CHEBI:15377"/>
        <dbReference type="ChEBI" id="CHEBI:15740"/>
        <dbReference type="ChEBI" id="CHEBI:58909"/>
        <dbReference type="ChEBI" id="CHEBI:60463"/>
        <dbReference type="EC" id="3.5.1.n3"/>
    </reaction>
</comment>
<comment type="pathway">
    <text evidence="1">Glycolipid biosynthesis; 4-amino-4-deoxy-alpha-L-arabinose undecaprenyl phosphate biosynthesis; 4-amino-4-deoxy-alpha-L-arabinose undecaprenyl phosphate from UDP-4-deoxy-4-formamido-beta-L-arabinose and undecaprenyl phosphate: step 2/2.</text>
</comment>
<comment type="pathway">
    <text evidence="1">Bacterial outer membrane biogenesis; lipopolysaccharide biosynthesis.</text>
</comment>
<comment type="similarity">
    <text evidence="1">Belongs to the polysaccharide deacetylase family. ArnD deformylase subfamily.</text>
</comment>
<gene>
    <name evidence="1" type="primary">arnD</name>
    <name type="ordered locus">Pfl01_2844</name>
</gene>
<keyword id="KW-0046">Antibiotic resistance</keyword>
<keyword id="KW-0378">Hydrolase</keyword>
<keyword id="KW-0441">Lipid A biosynthesis</keyword>
<keyword id="KW-0444">Lipid biosynthesis</keyword>
<keyword id="KW-0443">Lipid metabolism</keyword>
<keyword id="KW-0448">Lipopolysaccharide biosynthesis</keyword>
<feature type="chain" id="PRO_0000383524" description="Probable 4-deoxy-4-formamido-L-arabinose-phosphoundecaprenol deformylase ArnD">
    <location>
        <begin position="1"/>
        <end position="294"/>
    </location>
</feature>
<feature type="domain" description="NodB homology" evidence="1">
    <location>
        <begin position="1"/>
        <end position="259"/>
    </location>
</feature>